<dbReference type="EMBL" id="AF323729">
    <property type="protein sequence ID" value="AAG53410.1"/>
    <property type="molecule type" value="mRNA"/>
</dbReference>
<dbReference type="EMBL" id="AK289523">
    <property type="protein sequence ID" value="BAF82212.1"/>
    <property type="molecule type" value="mRNA"/>
</dbReference>
<dbReference type="EMBL" id="AC003665">
    <property type="status" value="NOT_ANNOTATED_CDS"/>
    <property type="molecule type" value="Genomic_DNA"/>
</dbReference>
<dbReference type="EMBL" id="CH471109">
    <property type="protein sequence ID" value="EAW94800.1"/>
    <property type="molecule type" value="Genomic_DNA"/>
</dbReference>
<dbReference type="EMBL" id="CH471109">
    <property type="protein sequence ID" value="EAW94801.1"/>
    <property type="molecule type" value="Genomic_DNA"/>
</dbReference>
<dbReference type="EMBL" id="CH471109">
    <property type="protein sequence ID" value="EAW94802.1"/>
    <property type="molecule type" value="Genomic_DNA"/>
</dbReference>
<dbReference type="EMBL" id="CH471109">
    <property type="protein sequence ID" value="EAW94803.1"/>
    <property type="molecule type" value="Genomic_DNA"/>
</dbReference>
<dbReference type="EMBL" id="BC028010">
    <property type="protein sequence ID" value="AAH28010.1"/>
    <property type="molecule type" value="mRNA"/>
</dbReference>
<dbReference type="EMBL" id="BC065482">
    <property type="protein sequence ID" value="AAH65482.1"/>
    <property type="molecule type" value="mRNA"/>
</dbReference>
<dbReference type="CCDS" id="CCDS11515.1">
    <molecule id="Q9BZF2-1"/>
</dbReference>
<dbReference type="RefSeq" id="NP_665741.1">
    <molecule id="Q9BZF2-1"/>
    <property type="nucleotide sequence ID" value="NM_145798.3"/>
</dbReference>
<dbReference type="RefSeq" id="XP_047291248.1">
    <molecule id="Q9BZF2-1"/>
    <property type="nucleotide sequence ID" value="XM_047435292.1"/>
</dbReference>
<dbReference type="RefSeq" id="XP_054170921.1">
    <molecule id="Q9BZF2-1"/>
    <property type="nucleotide sequence ID" value="XM_054314946.1"/>
</dbReference>
<dbReference type="SMR" id="Q9BZF2"/>
<dbReference type="BioGRID" id="125382">
    <property type="interactions" value="16"/>
</dbReference>
<dbReference type="ELM" id="Q9BZF2"/>
<dbReference type="FunCoup" id="Q9BZF2">
    <property type="interactions" value="1278"/>
</dbReference>
<dbReference type="IntAct" id="Q9BZF2">
    <property type="interactions" value="8"/>
</dbReference>
<dbReference type="STRING" id="9606.ENSP00000007414"/>
<dbReference type="GlyGen" id="Q9BZF2">
    <property type="glycosylation" value="3 sites, 1 O-linked glycan (2 sites)"/>
</dbReference>
<dbReference type="iPTMnet" id="Q9BZF2"/>
<dbReference type="MetOSite" id="Q9BZF2"/>
<dbReference type="PhosphoSitePlus" id="Q9BZF2"/>
<dbReference type="BioMuta" id="OSBPL7"/>
<dbReference type="DMDM" id="20139132"/>
<dbReference type="jPOST" id="Q9BZF2"/>
<dbReference type="MassIVE" id="Q9BZF2"/>
<dbReference type="PaxDb" id="9606-ENSP00000007414"/>
<dbReference type="PeptideAtlas" id="Q9BZF2"/>
<dbReference type="ProteomicsDB" id="79830">
    <molecule id="Q9BZF2-1"/>
</dbReference>
<dbReference type="Pumba" id="Q9BZF2"/>
<dbReference type="Antibodypedia" id="30177">
    <property type="antibodies" value="46 antibodies from 20 providers"/>
</dbReference>
<dbReference type="DNASU" id="114881"/>
<dbReference type="Ensembl" id="ENST00000007414.8">
    <molecule id="Q9BZF2-1"/>
    <property type="protein sequence ID" value="ENSP00000007414.3"/>
    <property type="gene ID" value="ENSG00000006025.13"/>
</dbReference>
<dbReference type="Ensembl" id="ENST00000613735.4">
    <molecule id="Q9BZF2-2"/>
    <property type="protein sequence ID" value="ENSP00000479827.1"/>
    <property type="gene ID" value="ENSG00000006025.13"/>
</dbReference>
<dbReference type="GeneID" id="114881"/>
<dbReference type="KEGG" id="hsa:114881"/>
<dbReference type="MANE-Select" id="ENST00000007414.8">
    <property type="protein sequence ID" value="ENSP00000007414.3"/>
    <property type="RefSeq nucleotide sequence ID" value="NM_145798.3"/>
    <property type="RefSeq protein sequence ID" value="NP_665741.1"/>
</dbReference>
<dbReference type="UCSC" id="uc002ilx.2">
    <molecule id="Q9BZF2-1"/>
    <property type="organism name" value="human"/>
</dbReference>
<dbReference type="AGR" id="HGNC:16387"/>
<dbReference type="CTD" id="114881"/>
<dbReference type="DisGeNET" id="114881"/>
<dbReference type="GeneCards" id="OSBPL7"/>
<dbReference type="HGNC" id="HGNC:16387">
    <property type="gene designation" value="OSBPL7"/>
</dbReference>
<dbReference type="HPA" id="ENSG00000006025">
    <property type="expression patterns" value="Low tissue specificity"/>
</dbReference>
<dbReference type="MIM" id="606735">
    <property type="type" value="gene"/>
</dbReference>
<dbReference type="neXtProt" id="NX_Q9BZF2"/>
<dbReference type="OpenTargets" id="ENSG00000006025"/>
<dbReference type="PharmGKB" id="PA32831"/>
<dbReference type="VEuPathDB" id="HostDB:ENSG00000006025"/>
<dbReference type="eggNOG" id="KOG1737">
    <property type="taxonomic scope" value="Eukaryota"/>
</dbReference>
<dbReference type="GeneTree" id="ENSGT00940000157439"/>
<dbReference type="HOGENOM" id="CLU_007105_4_1_1"/>
<dbReference type="InParanoid" id="Q9BZF2"/>
<dbReference type="OMA" id="TTDPCER"/>
<dbReference type="OrthoDB" id="1854502at2759"/>
<dbReference type="PAN-GO" id="Q9BZF2">
    <property type="GO annotations" value="6 GO annotations based on evolutionary models"/>
</dbReference>
<dbReference type="PhylomeDB" id="Q9BZF2"/>
<dbReference type="TreeFam" id="TF320922"/>
<dbReference type="PathwayCommons" id="Q9BZF2"/>
<dbReference type="Reactome" id="R-HSA-192105">
    <property type="pathway name" value="Synthesis of bile acids and bile salts"/>
</dbReference>
<dbReference type="SignaLink" id="Q9BZF2"/>
<dbReference type="BioGRID-ORCS" id="114881">
    <property type="hits" value="18 hits in 1156 CRISPR screens"/>
</dbReference>
<dbReference type="ChiTaRS" id="OSBPL7">
    <property type="organism name" value="human"/>
</dbReference>
<dbReference type="GenomeRNAi" id="114881"/>
<dbReference type="Pharos" id="Q9BZF2">
    <property type="development level" value="Tbio"/>
</dbReference>
<dbReference type="PRO" id="PR:Q9BZF2"/>
<dbReference type="Proteomes" id="UP000005640">
    <property type="component" value="Chromosome 17"/>
</dbReference>
<dbReference type="RNAct" id="Q9BZF2">
    <property type="molecule type" value="protein"/>
</dbReference>
<dbReference type="Bgee" id="ENSG00000006025">
    <property type="expression patterns" value="Expressed in mucosa of transverse colon and 135 other cell types or tissues"/>
</dbReference>
<dbReference type="ExpressionAtlas" id="Q9BZF2">
    <property type="expression patterns" value="baseline and differential"/>
</dbReference>
<dbReference type="GO" id="GO:0005776">
    <property type="term" value="C:autophagosome"/>
    <property type="evidence" value="ECO:0000314"/>
    <property type="project" value="BHF-UCL"/>
</dbReference>
<dbReference type="GO" id="GO:0005829">
    <property type="term" value="C:cytosol"/>
    <property type="evidence" value="ECO:0000314"/>
    <property type="project" value="BHF-UCL"/>
</dbReference>
<dbReference type="GO" id="GO:0005789">
    <property type="term" value="C:endoplasmic reticulum membrane"/>
    <property type="evidence" value="ECO:0007669"/>
    <property type="project" value="UniProtKB-SubCell"/>
</dbReference>
<dbReference type="GO" id="GO:0031965">
    <property type="term" value="C:nuclear membrane"/>
    <property type="evidence" value="ECO:0000318"/>
    <property type="project" value="GO_Central"/>
</dbReference>
<dbReference type="GO" id="GO:0005654">
    <property type="term" value="C:nucleoplasm"/>
    <property type="evidence" value="ECO:0000314"/>
    <property type="project" value="HPA"/>
</dbReference>
<dbReference type="GO" id="GO:0097038">
    <property type="term" value="C:perinuclear endoplasmic reticulum"/>
    <property type="evidence" value="ECO:0000314"/>
    <property type="project" value="BHF-UCL"/>
</dbReference>
<dbReference type="GO" id="GO:0005886">
    <property type="term" value="C:plasma membrane"/>
    <property type="evidence" value="ECO:0000314"/>
    <property type="project" value="BHF-UCL"/>
</dbReference>
<dbReference type="GO" id="GO:0015485">
    <property type="term" value="F:cholesterol binding"/>
    <property type="evidence" value="ECO:0000314"/>
    <property type="project" value="BHF-UCL"/>
</dbReference>
<dbReference type="GO" id="GO:0120015">
    <property type="term" value="F:sterol transfer activity"/>
    <property type="evidence" value="ECO:0000304"/>
    <property type="project" value="Reactome"/>
</dbReference>
<dbReference type="GO" id="GO:0006699">
    <property type="term" value="P:bile acid biosynthetic process"/>
    <property type="evidence" value="ECO:0000304"/>
    <property type="project" value="Reactome"/>
</dbReference>
<dbReference type="GO" id="GO:0071397">
    <property type="term" value="P:cellular response to cholesterol"/>
    <property type="evidence" value="ECO:0000315"/>
    <property type="project" value="BHF-UCL"/>
</dbReference>
<dbReference type="GO" id="GO:1901800">
    <property type="term" value="P:positive regulation of proteasomal protein catabolic process"/>
    <property type="evidence" value="ECO:0000315"/>
    <property type="project" value="BHF-UCL"/>
</dbReference>
<dbReference type="GO" id="GO:0010506">
    <property type="term" value="P:regulation of autophagy"/>
    <property type="evidence" value="ECO:0000303"/>
    <property type="project" value="ParkinsonsUK-UCL"/>
</dbReference>
<dbReference type="CDD" id="cd13287">
    <property type="entry name" value="PH_ORP3_ORP6_ORP7"/>
    <property type="match status" value="1"/>
</dbReference>
<dbReference type="FunFam" id="2.30.29.30:FF:000011">
    <property type="entry name" value="Oxysterol-binding protein"/>
    <property type="match status" value="1"/>
</dbReference>
<dbReference type="FunFam" id="2.40.160.120:FF:000001">
    <property type="entry name" value="Oxysterol-binding protein"/>
    <property type="match status" value="1"/>
</dbReference>
<dbReference type="FunFam" id="3.30.70.3490:FF:000002">
    <property type="entry name" value="Oxysterol-binding protein"/>
    <property type="match status" value="1"/>
</dbReference>
<dbReference type="Gene3D" id="2.40.160.120">
    <property type="match status" value="1"/>
</dbReference>
<dbReference type="Gene3D" id="3.30.70.3490">
    <property type="match status" value="1"/>
</dbReference>
<dbReference type="Gene3D" id="2.30.29.30">
    <property type="entry name" value="Pleckstrin-homology domain (PH domain)/Phosphotyrosine-binding domain (PTB)"/>
    <property type="match status" value="1"/>
</dbReference>
<dbReference type="InterPro" id="IPR037239">
    <property type="entry name" value="OSBP_sf"/>
</dbReference>
<dbReference type="InterPro" id="IPR000648">
    <property type="entry name" value="Oxysterol-bd"/>
</dbReference>
<dbReference type="InterPro" id="IPR018494">
    <property type="entry name" value="Oxysterol-bd_CS"/>
</dbReference>
<dbReference type="InterPro" id="IPR011993">
    <property type="entry name" value="PH-like_dom_sf"/>
</dbReference>
<dbReference type="InterPro" id="IPR041680">
    <property type="entry name" value="PH_8"/>
</dbReference>
<dbReference type="InterPro" id="IPR001849">
    <property type="entry name" value="PH_domain"/>
</dbReference>
<dbReference type="PANTHER" id="PTHR10972">
    <property type="entry name" value="OXYSTEROL-BINDING PROTEIN-RELATED"/>
    <property type="match status" value="1"/>
</dbReference>
<dbReference type="PANTHER" id="PTHR10972:SF85">
    <property type="entry name" value="OXYSTEROL-BINDING PROTEIN-RELATED PROTEIN 7"/>
    <property type="match status" value="1"/>
</dbReference>
<dbReference type="Pfam" id="PF01237">
    <property type="entry name" value="Oxysterol_BP"/>
    <property type="match status" value="1"/>
</dbReference>
<dbReference type="Pfam" id="PF15409">
    <property type="entry name" value="PH_8"/>
    <property type="match status" value="1"/>
</dbReference>
<dbReference type="SMART" id="SM00233">
    <property type="entry name" value="PH"/>
    <property type="match status" value="1"/>
</dbReference>
<dbReference type="SUPFAM" id="SSF144000">
    <property type="entry name" value="Oxysterol-binding protein-like"/>
    <property type="match status" value="1"/>
</dbReference>
<dbReference type="SUPFAM" id="SSF50729">
    <property type="entry name" value="PH domain-like"/>
    <property type="match status" value="1"/>
</dbReference>
<dbReference type="PROSITE" id="PS01013">
    <property type="entry name" value="OSBP"/>
    <property type="match status" value="1"/>
</dbReference>
<dbReference type="PROSITE" id="PS50003">
    <property type="entry name" value="PH_DOMAIN"/>
    <property type="match status" value="1"/>
</dbReference>
<name>OSBL7_HUMAN</name>
<protein>
    <recommendedName>
        <fullName>Oxysterol-binding protein-related protein 7</fullName>
        <shortName>ORP-7</shortName>
        <shortName>OSBP-related protein 7</shortName>
    </recommendedName>
</protein>
<comment type="subcellular location">
    <subcellularLocation>
        <location evidence="3">Cytoplasm</location>
        <location evidence="3">Cytosol</location>
    </subcellularLocation>
    <subcellularLocation>
        <location evidence="3">Endoplasmic reticulum membrane</location>
    </subcellularLocation>
    <subcellularLocation>
        <location evidence="3">Cell membrane</location>
    </subcellularLocation>
</comment>
<comment type="alternative products">
    <event type="alternative splicing"/>
    <isoform>
        <id>Q9BZF2-1</id>
        <name>1</name>
        <sequence type="displayed"/>
    </isoform>
    <isoform>
        <id>Q9BZF2-2</id>
        <name>2</name>
        <sequence type="described" ref="VSP_057227 VSP_057228"/>
    </isoform>
</comment>
<comment type="tissue specificity">
    <text evidence="3">Expressed in epithelium of small and large intestines (at protein level). Expressed in stomach, duodenum, jejunum, ascending colon, spleen, thymus, lymph node, trachea and leukocytes.</text>
</comment>
<comment type="developmental stage">
    <text evidence="3">Expressed in fetal lung and thymus.</text>
</comment>
<comment type="similarity">
    <text evidence="6">Belongs to the OSBP family.</text>
</comment>
<keyword id="KW-0025">Alternative splicing</keyword>
<keyword id="KW-1003">Cell membrane</keyword>
<keyword id="KW-0963">Cytoplasm</keyword>
<keyword id="KW-0256">Endoplasmic reticulum</keyword>
<keyword id="KW-0445">Lipid transport</keyword>
<keyword id="KW-0446">Lipid-binding</keyword>
<keyword id="KW-0472">Membrane</keyword>
<keyword id="KW-0597">Phosphoprotein</keyword>
<keyword id="KW-1267">Proteomics identification</keyword>
<keyword id="KW-1185">Reference proteome</keyword>
<keyword id="KW-0813">Transport</keyword>
<accession>Q9BZF2</accession>
<accession>D3DTT6</accession>
<accession>Q6PIV6</accession>
<feature type="chain" id="PRO_0000100377" description="Oxysterol-binding protein-related protein 7">
    <location>
        <begin position="1"/>
        <end position="842"/>
    </location>
</feature>
<feature type="domain" description="PH" evidence="1">
    <location>
        <begin position="47"/>
        <end position="142"/>
    </location>
</feature>
<feature type="region of interest" description="Disordered" evidence="2">
    <location>
        <begin position="1"/>
        <end position="28"/>
    </location>
</feature>
<feature type="region of interest" description="Disordered" evidence="2">
    <location>
        <begin position="330"/>
        <end position="369"/>
    </location>
</feature>
<feature type="compositionally biased region" description="Low complexity" evidence="2">
    <location>
        <begin position="14"/>
        <end position="27"/>
    </location>
</feature>
<feature type="compositionally biased region" description="Low complexity" evidence="2">
    <location>
        <begin position="354"/>
        <end position="369"/>
    </location>
</feature>
<feature type="modified residue" description="Phosphothreonine" evidence="7">
    <location>
        <position position="171"/>
    </location>
</feature>
<feature type="modified residue" description="Phosphoserine" evidence="7">
    <location>
        <position position="217"/>
    </location>
</feature>
<feature type="modified residue" description="Phosphoserine" evidence="7">
    <location>
        <position position="226"/>
    </location>
</feature>
<feature type="modified residue" description="Phosphoserine" evidence="7">
    <location>
        <position position="256"/>
    </location>
</feature>
<feature type="modified residue" description="Phosphoserine" evidence="7">
    <location>
        <position position="272"/>
    </location>
</feature>
<feature type="splice variant" id="VSP_057227" description="In isoform 2." evidence="4 5">
    <original>SEASTGQRRLHSLST</original>
    <variation>RPGGQGDWCGERASS</variation>
    <location>
        <begin position="343"/>
        <end position="357"/>
    </location>
</feature>
<feature type="splice variant" id="VSP_057228" description="In isoform 2." evidence="4 5">
    <location>
        <begin position="358"/>
        <end position="842"/>
    </location>
</feature>
<feature type="sequence variant" id="VAR_060080" description="In dbSNP:rs8076196.">
    <original>M</original>
    <variation>I</variation>
    <location>
        <position position="148"/>
    </location>
</feature>
<feature type="sequence variant" id="VAR_053551" description="In dbSNP:rs35437144.">
    <original>T</original>
    <variation>I</variation>
    <location>
        <position position="156"/>
    </location>
</feature>
<feature type="sequence variant" id="VAR_060081" description="In dbSNP:rs8071195.">
    <original>A</original>
    <variation>E</variation>
    <location>
        <position position="169"/>
    </location>
</feature>
<gene>
    <name type="primary">OSBPL7</name>
    <name type="synonym">ORP7</name>
</gene>
<organism>
    <name type="scientific">Homo sapiens</name>
    <name type="common">Human</name>
    <dbReference type="NCBI Taxonomy" id="9606"/>
    <lineage>
        <taxon>Eukaryota</taxon>
        <taxon>Metazoa</taxon>
        <taxon>Chordata</taxon>
        <taxon>Craniata</taxon>
        <taxon>Vertebrata</taxon>
        <taxon>Euteleostomi</taxon>
        <taxon>Mammalia</taxon>
        <taxon>Eutheria</taxon>
        <taxon>Euarchontoglires</taxon>
        <taxon>Primates</taxon>
        <taxon>Haplorrhini</taxon>
        <taxon>Catarrhini</taxon>
        <taxon>Hominidae</taxon>
        <taxon>Homo</taxon>
    </lineage>
</organism>
<evidence type="ECO:0000255" key="1">
    <source>
        <dbReference type="PROSITE-ProRule" id="PRU00145"/>
    </source>
</evidence>
<evidence type="ECO:0000256" key="2">
    <source>
        <dbReference type="SAM" id="MobiDB-lite"/>
    </source>
</evidence>
<evidence type="ECO:0000269" key="3">
    <source>
    </source>
</evidence>
<evidence type="ECO:0000303" key="4">
    <source>
    </source>
</evidence>
<evidence type="ECO:0000303" key="5">
    <source>
    </source>
</evidence>
<evidence type="ECO:0000305" key="6"/>
<evidence type="ECO:0007744" key="7">
    <source>
    </source>
</evidence>
<sequence length="842" mass="95432">MDFQERDPPFLPESAQSSKPSSAQQASELWEVVEEPRVRLGTEGVMPERQEGHLLKKRKWPLKGWHKRYFVLEDGILHYATTRQDITKGKLHGSIDVRLSVMSINKKAQRIDLDTEDNIYHLKIKSQDLFQSWVAQLRAHRLAHRLDMPRGSLPSTAHRKVPGAQLPTAATASALPGLGPREKVSSWLRDSDGLDRCSHELSECQGKLQELHRLLQSLESLHRIPSAPVIPTHQASVTTERPKKGKRTSRMWCTQSFAKDDTIGRVGRLHGSVPNLSRYLESRDSSGTRGLPPTDYAHLQRSFWALAQKVHSSLSSVLAALTMERDQLRDMHQGSELSRMGVSEASTGQRRLHSLSTSSDTTADSFSSLNPEEQEALYMKGRELTPQLSQTSILSLADSHTEFFDACEVLLSASSSENEGSEEEESCTSEITTSLSEEMLDLRGAERCQKGGCVPGRPMGPPRRRCLPAASGPGADVSLWNILRNNIGKDLSKVSMPVQLNEPLNTLQRLCEELEYSSLLDQASRIADPCERMVYIAAFAVSAYSSTYHRAGCKPFNPVLGETYECERPDRGFRFISEQVSHHPPISACHAESENFAFWQDMKWKNKFWGKSLEIVPVGTVNVSLPRFGDHFEWNKVTSCIHNVLSGQRWIEHYGEVLIRNTQDSSCHCKITFCKAKYWSSNVHEVQGAVLSRSGRVLHRLFGKWHEGLYRGPTPGGQCIWKPNSMPPDHERNFGFTQFALELNELTAELKRSLPSTDTRLRPDQRYLEEGNIQAAEAQKRRIEQLQRDRRKVMEENNIVHQARFFRRQTDSSGKEWWVTNNTYWRLRAEPGYGNMDGAVLW</sequence>
<reference key="1">
    <citation type="journal article" date="2001" name="J. Lipid Res.">
        <title>The OSBP-related protein family in humans.</title>
        <authorList>
            <person name="Lehto M."/>
            <person name="Laitinen S."/>
            <person name="Chinetti G."/>
            <person name="Johansson M."/>
            <person name="Ehnholm C."/>
            <person name="Staels B."/>
            <person name="Ikonen E."/>
            <person name="Olkkonen V.M."/>
        </authorList>
    </citation>
    <scope>NUCLEOTIDE SEQUENCE [MRNA] (ISOFORM 1)</scope>
</reference>
<reference key="2">
    <citation type="journal article" date="2004" name="Nat. Genet.">
        <title>Complete sequencing and characterization of 21,243 full-length human cDNAs.</title>
        <authorList>
            <person name="Ota T."/>
            <person name="Suzuki Y."/>
            <person name="Nishikawa T."/>
            <person name="Otsuki T."/>
            <person name="Sugiyama T."/>
            <person name="Irie R."/>
            <person name="Wakamatsu A."/>
            <person name="Hayashi K."/>
            <person name="Sato H."/>
            <person name="Nagai K."/>
            <person name="Kimura K."/>
            <person name="Makita H."/>
            <person name="Sekine M."/>
            <person name="Obayashi M."/>
            <person name="Nishi T."/>
            <person name="Shibahara T."/>
            <person name="Tanaka T."/>
            <person name="Ishii S."/>
            <person name="Yamamoto J."/>
            <person name="Saito K."/>
            <person name="Kawai Y."/>
            <person name="Isono Y."/>
            <person name="Nakamura Y."/>
            <person name="Nagahari K."/>
            <person name="Murakami K."/>
            <person name="Yasuda T."/>
            <person name="Iwayanagi T."/>
            <person name="Wagatsuma M."/>
            <person name="Shiratori A."/>
            <person name="Sudo H."/>
            <person name="Hosoiri T."/>
            <person name="Kaku Y."/>
            <person name="Kodaira H."/>
            <person name="Kondo H."/>
            <person name="Sugawara M."/>
            <person name="Takahashi M."/>
            <person name="Kanda K."/>
            <person name="Yokoi T."/>
            <person name="Furuya T."/>
            <person name="Kikkawa E."/>
            <person name="Omura Y."/>
            <person name="Abe K."/>
            <person name="Kamihara K."/>
            <person name="Katsuta N."/>
            <person name="Sato K."/>
            <person name="Tanikawa M."/>
            <person name="Yamazaki M."/>
            <person name="Ninomiya K."/>
            <person name="Ishibashi T."/>
            <person name="Yamashita H."/>
            <person name="Murakawa K."/>
            <person name="Fujimori K."/>
            <person name="Tanai H."/>
            <person name="Kimata M."/>
            <person name="Watanabe M."/>
            <person name="Hiraoka S."/>
            <person name="Chiba Y."/>
            <person name="Ishida S."/>
            <person name="Ono Y."/>
            <person name="Takiguchi S."/>
            <person name="Watanabe S."/>
            <person name="Yosida M."/>
            <person name="Hotuta T."/>
            <person name="Kusano J."/>
            <person name="Kanehori K."/>
            <person name="Takahashi-Fujii A."/>
            <person name="Hara H."/>
            <person name="Tanase T.-O."/>
            <person name="Nomura Y."/>
            <person name="Togiya S."/>
            <person name="Komai F."/>
            <person name="Hara R."/>
            <person name="Takeuchi K."/>
            <person name="Arita M."/>
            <person name="Imose N."/>
            <person name="Musashino K."/>
            <person name="Yuuki H."/>
            <person name="Oshima A."/>
            <person name="Sasaki N."/>
            <person name="Aotsuka S."/>
            <person name="Yoshikawa Y."/>
            <person name="Matsunawa H."/>
            <person name="Ichihara T."/>
            <person name="Shiohata N."/>
            <person name="Sano S."/>
            <person name="Moriya S."/>
            <person name="Momiyama H."/>
            <person name="Satoh N."/>
            <person name="Takami S."/>
            <person name="Terashima Y."/>
            <person name="Suzuki O."/>
            <person name="Nakagawa S."/>
            <person name="Senoh A."/>
            <person name="Mizoguchi H."/>
            <person name="Goto Y."/>
            <person name="Shimizu F."/>
            <person name="Wakebe H."/>
            <person name="Hishigaki H."/>
            <person name="Watanabe T."/>
            <person name="Sugiyama A."/>
            <person name="Takemoto M."/>
            <person name="Kawakami B."/>
            <person name="Yamazaki M."/>
            <person name="Watanabe K."/>
            <person name="Kumagai A."/>
            <person name="Itakura S."/>
            <person name="Fukuzumi Y."/>
            <person name="Fujimori Y."/>
            <person name="Komiyama M."/>
            <person name="Tashiro H."/>
            <person name="Tanigami A."/>
            <person name="Fujiwara T."/>
            <person name="Ono T."/>
            <person name="Yamada K."/>
            <person name="Fujii Y."/>
            <person name="Ozaki K."/>
            <person name="Hirao M."/>
            <person name="Ohmori Y."/>
            <person name="Kawabata A."/>
            <person name="Hikiji T."/>
            <person name="Kobatake N."/>
            <person name="Inagaki H."/>
            <person name="Ikema Y."/>
            <person name="Okamoto S."/>
            <person name="Okitani R."/>
            <person name="Kawakami T."/>
            <person name="Noguchi S."/>
            <person name="Itoh T."/>
            <person name="Shigeta K."/>
            <person name="Senba T."/>
            <person name="Matsumura K."/>
            <person name="Nakajima Y."/>
            <person name="Mizuno T."/>
            <person name="Morinaga M."/>
            <person name="Sasaki M."/>
            <person name="Togashi T."/>
            <person name="Oyama M."/>
            <person name="Hata H."/>
            <person name="Watanabe M."/>
            <person name="Komatsu T."/>
            <person name="Mizushima-Sugano J."/>
            <person name="Satoh T."/>
            <person name="Shirai Y."/>
            <person name="Takahashi Y."/>
            <person name="Nakagawa K."/>
            <person name="Okumura K."/>
            <person name="Nagase T."/>
            <person name="Nomura N."/>
            <person name="Kikuchi H."/>
            <person name="Masuho Y."/>
            <person name="Yamashita R."/>
            <person name="Nakai K."/>
            <person name="Yada T."/>
            <person name="Nakamura Y."/>
            <person name="Ohara O."/>
            <person name="Isogai T."/>
            <person name="Sugano S."/>
        </authorList>
    </citation>
    <scope>NUCLEOTIDE SEQUENCE [LARGE SCALE MRNA] (ISOFORM 2)</scope>
    <source>
        <tissue>Cerebellum</tissue>
    </source>
</reference>
<reference key="3">
    <citation type="journal article" date="2006" name="Nature">
        <title>DNA sequence of human chromosome 17 and analysis of rearrangement in the human lineage.</title>
        <authorList>
            <person name="Zody M.C."/>
            <person name="Garber M."/>
            <person name="Adams D.J."/>
            <person name="Sharpe T."/>
            <person name="Harrow J."/>
            <person name="Lupski J.R."/>
            <person name="Nicholson C."/>
            <person name="Searle S.M."/>
            <person name="Wilming L."/>
            <person name="Young S.K."/>
            <person name="Abouelleil A."/>
            <person name="Allen N.R."/>
            <person name="Bi W."/>
            <person name="Bloom T."/>
            <person name="Borowsky M.L."/>
            <person name="Bugalter B.E."/>
            <person name="Butler J."/>
            <person name="Chang J.L."/>
            <person name="Chen C.-K."/>
            <person name="Cook A."/>
            <person name="Corum B."/>
            <person name="Cuomo C.A."/>
            <person name="de Jong P.J."/>
            <person name="DeCaprio D."/>
            <person name="Dewar K."/>
            <person name="FitzGerald M."/>
            <person name="Gilbert J."/>
            <person name="Gibson R."/>
            <person name="Gnerre S."/>
            <person name="Goldstein S."/>
            <person name="Grafham D.V."/>
            <person name="Grocock R."/>
            <person name="Hafez N."/>
            <person name="Hagopian D.S."/>
            <person name="Hart E."/>
            <person name="Norman C.H."/>
            <person name="Humphray S."/>
            <person name="Jaffe D.B."/>
            <person name="Jones M."/>
            <person name="Kamal M."/>
            <person name="Khodiyar V.K."/>
            <person name="LaButti K."/>
            <person name="Laird G."/>
            <person name="Lehoczky J."/>
            <person name="Liu X."/>
            <person name="Lokyitsang T."/>
            <person name="Loveland J."/>
            <person name="Lui A."/>
            <person name="Macdonald P."/>
            <person name="Major J.E."/>
            <person name="Matthews L."/>
            <person name="Mauceli E."/>
            <person name="McCarroll S.A."/>
            <person name="Mihalev A.H."/>
            <person name="Mudge J."/>
            <person name="Nguyen C."/>
            <person name="Nicol R."/>
            <person name="O'Leary S.B."/>
            <person name="Osoegawa K."/>
            <person name="Schwartz D.C."/>
            <person name="Shaw-Smith C."/>
            <person name="Stankiewicz P."/>
            <person name="Steward C."/>
            <person name="Swarbreck D."/>
            <person name="Venkataraman V."/>
            <person name="Whittaker C.A."/>
            <person name="Yang X."/>
            <person name="Zimmer A.R."/>
            <person name="Bradley A."/>
            <person name="Hubbard T."/>
            <person name="Birren B.W."/>
            <person name="Rogers J."/>
            <person name="Lander E.S."/>
            <person name="Nusbaum C."/>
        </authorList>
    </citation>
    <scope>NUCLEOTIDE SEQUENCE [LARGE SCALE GENOMIC DNA]</scope>
</reference>
<reference key="4">
    <citation type="submission" date="2005-09" db="EMBL/GenBank/DDBJ databases">
        <authorList>
            <person name="Mural R.J."/>
            <person name="Istrail S."/>
            <person name="Sutton G.G."/>
            <person name="Florea L."/>
            <person name="Halpern A.L."/>
            <person name="Mobarry C.M."/>
            <person name="Lippert R."/>
            <person name="Walenz B."/>
            <person name="Shatkay H."/>
            <person name="Dew I."/>
            <person name="Miller J.R."/>
            <person name="Flanigan M.J."/>
            <person name="Edwards N.J."/>
            <person name="Bolanos R."/>
            <person name="Fasulo D."/>
            <person name="Halldorsson B.V."/>
            <person name="Hannenhalli S."/>
            <person name="Turner R."/>
            <person name="Yooseph S."/>
            <person name="Lu F."/>
            <person name="Nusskern D.R."/>
            <person name="Shue B.C."/>
            <person name="Zheng X.H."/>
            <person name="Zhong F."/>
            <person name="Delcher A.L."/>
            <person name="Huson D.H."/>
            <person name="Kravitz S.A."/>
            <person name="Mouchard L."/>
            <person name="Reinert K."/>
            <person name="Remington K.A."/>
            <person name="Clark A.G."/>
            <person name="Waterman M.S."/>
            <person name="Eichler E.E."/>
            <person name="Adams M.D."/>
            <person name="Hunkapiller M.W."/>
            <person name="Myers E.W."/>
            <person name="Venter J.C."/>
        </authorList>
    </citation>
    <scope>NUCLEOTIDE SEQUENCE [LARGE SCALE GENOMIC DNA]</scope>
</reference>
<reference key="5">
    <citation type="journal article" date="2004" name="Genome Res.">
        <title>The status, quality, and expansion of the NIH full-length cDNA project: the Mammalian Gene Collection (MGC).</title>
        <authorList>
            <consortium name="The MGC Project Team"/>
        </authorList>
    </citation>
    <scope>NUCLEOTIDE SEQUENCE [LARGE SCALE MRNA] (ISOFORMS 1 AND 2)</scope>
    <source>
        <tissue>Blood</tissue>
        <tissue>Pancreas</tissue>
    </source>
</reference>
<reference key="6">
    <citation type="journal article" date="2004" name="Cell Tissue Res.">
        <title>Subfamily III of mammalian oxysterol-binding protein (OSBP) homologues: the expression and intracellular localization of ORP3, ORP6, and ORP7.</title>
        <authorList>
            <person name="Lehto M."/>
            <person name="Tienari J."/>
            <person name="Lehtonen S."/>
            <person name="Lehtonen E."/>
            <person name="Olkkonen V.M."/>
        </authorList>
    </citation>
    <scope>SUBCELLULAR LOCATION</scope>
    <scope>TISSUE SPECIFICITY</scope>
    <scope>DEVELOPMENTAL STAGE</scope>
</reference>
<reference key="7">
    <citation type="journal article" date="2013" name="J. Proteome Res.">
        <title>Toward a comprehensive characterization of a human cancer cell phosphoproteome.</title>
        <authorList>
            <person name="Zhou H."/>
            <person name="Di Palma S."/>
            <person name="Preisinger C."/>
            <person name="Peng M."/>
            <person name="Polat A.N."/>
            <person name="Heck A.J."/>
            <person name="Mohammed S."/>
        </authorList>
    </citation>
    <scope>PHOSPHORYLATION [LARGE SCALE ANALYSIS] AT THR-171; SER-217; SER-226; SER-256 AND SER-272</scope>
    <scope>IDENTIFICATION BY MASS SPECTROMETRY [LARGE SCALE ANALYSIS]</scope>
    <source>
        <tissue>Erythroleukemia</tissue>
    </source>
</reference>
<proteinExistence type="evidence at protein level"/>